<name>TOXC_COCCA</name>
<accession>Q92215</accession>
<feature type="chain" id="PRO_0000180291" description="Fatty acid synthase beta subunit TOXC">
    <location>
        <begin position="1"/>
        <end position="2080"/>
    </location>
</feature>
<feature type="domain" description="Starter acyltransferase (SAT)" evidence="2">
    <location>
        <begin position="170"/>
        <end position="397"/>
    </location>
</feature>
<feature type="domain" description="MaoC-like" evidence="2">
    <location>
        <begin position="1544"/>
        <end position="1662"/>
    </location>
</feature>
<feature type="domain" description="Malonyl-CoA:ACP transacylase (MAT)" evidence="2">
    <location>
        <begin position="1682"/>
        <end position="2046"/>
    </location>
</feature>
<feature type="region of interest" description="Enoyl reductase (ER) domain" evidence="2">
    <location>
        <begin position="585"/>
        <end position="830"/>
    </location>
</feature>
<feature type="region of interest" description="Dehydratase (DH) domain" evidence="2">
    <location>
        <begin position="1155"/>
        <end position="1644"/>
    </location>
</feature>
<feature type="region of interest" description="Malonyl/palmitoyl transferase (MT/PT) domain" evidence="2">
    <location>
        <begin position="1683"/>
        <end position="2046"/>
    </location>
</feature>
<feature type="active site" description="For acetyltransferase activity" evidence="3">
    <location>
        <position position="276"/>
    </location>
</feature>
<feature type="active site" description="For malonyltransferase activity" evidence="3">
    <location>
        <position position="1828"/>
    </location>
</feature>
<reference key="1">
    <citation type="journal article" date="1997" name="Mol. Plant Microbe Interact.">
        <title>A fatty acid synthase gene in Cochliobolus carbonum required for production of HC-toxin, cyclo(D-prolyl-L-alanyl-D-alanyl-L-2-amino-9, 10-epoxi-8-oxodecanoyl).</title>
        <authorList>
            <person name="Ahn J.-H."/>
            <person name="Walton J.D."/>
        </authorList>
    </citation>
    <scope>NUCLEOTIDE SEQUENCE [GENOMIC DNA]</scope>
    <scope>FUNCTION</scope>
    <scope>DISRUPTION PHENOTYPE</scope>
    <scope>PATHWAY</scope>
    <source>
        <strain>ATCC 90305 / SB111 / 2R15</strain>
    </source>
</reference>
<reference key="2">
    <citation type="journal article" date="1996" name="Plant Cell">
        <title>Chromosomal organization of TOX2, a complex locus controlling host-selective toxin biosynthesis in Cochliobolus carbonum.</title>
        <authorList>
            <person name="Ahn J.H."/>
            <person name="Walton J.D."/>
        </authorList>
    </citation>
    <scope>IDENTIFICATION WITHIN THE TOX2 CLUSTER</scope>
    <scope>FUNCTION</scope>
</reference>
<reference key="3">
    <citation type="journal article" date="2002" name="Fungal Genet. Biol.">
        <title>An extended physical map of the TOX2 locus of Cochliobolus carbonum required for biosynthesis of HC-toxin.</title>
        <authorList>
            <person name="Ahn J.H."/>
            <person name="Cheng Y.Q."/>
            <person name="Walton J.D."/>
        </authorList>
    </citation>
    <scope>TOX2 CLUSTER ORGANIZATION</scope>
</reference>
<sequence length="2080" mass="232268">MLLTAQIPESLTPFSISHGSLSVSWLLPYRLHCYATRLYRTFEATLAARSDNSEHPITLLSSVELAAHYMCYVAHETQANTDRACTQTHDISKLLLEDFEATFLRSNDIHTLASALPSSDSAKDELLRCYYETCFITKHNTPLNESALLKAAREGIVSLYTTFSGQGCGGRYFDELRELFRLYPSFVGTLISESGNLFRELASNPSAGRLFSKGFDIMAWLHHPQTTPDTEYLISAPVSFPIIGLVQLGHYAVSCRAMGLDPGAFQRSIRGSTGHSQGIVVAAAMSAADSWEAFDRLAISCLTVLFWIGVRSQQAAPQMSLSPAQIQDSIDHNEDVPSPMLSIIGLSRLDVQMHIDSINHYLPQSEHISISLVNGGRHIVVSGLPSTLYRFNLLLRKIKVPDHSGQPRATSKQKKAQFSARFLPITVPFHSHHLVSVGSVLEEDLKNVFIGSKDLGFPVFNTYTGRDLRAEVIGNIVPALVRMVTQYPVFWGAAVEFPGATHILEFGPGGLSGSGALTSHIKNGTGVRVIFAGLTSGSNRQVGYKQELFARDTCHVKFADDWSRKYAPSLVRTSNNSIVVNTKMSRLLGLPPIMVGGMTPTTAAWGFVAATMNAGYHIELAAGGYSDANAFENALLNIQKTTASGRGITVNLIYLSSHAVNWQIPLLRRLIIDGFRIEGITIGGGVPSIDVAKEYITTLGIKHIGFKPGPTTAIDAVIEIAQANPTFPVFLQWTGGRSGGHHSNEDFHQPILETYDRIRQCDNIILIAGSGFGGAADTYPYITGEWSLRYDFPPMPFDGCLLGSRVMVAKEARTSPAAKRVIVETEGLNDNEWRRTYEEAAGGIITVQSEMGQPIHKIATRGVLFWAKLDQMIFSLPKEKRIAELQKHRSWIIKGLNDDFQKPWFGRDSADQVVELRDMTYAEVLRRMVQLLYVKHQRRWIHSSYAVLFKAFVNRLEERFTTKTVQSYLIQDCKTIDDPYNIITVVLLQYQQAIKETILTPDVEYFLLLCKRRGQKPVPFVPALDEDFEFFFKKDSLWQSEDLEAVVDQDVGRTCILQGPVAAKYSVKVDEPIAEILGSIHQGHVTRLREERYCATLDSIPFVEYFGGESIQLDMSSLADGIEQSHNEQASIYSLPSSLSMPLPAVDVWMSLLAGKSRSWRHAIMSAGIVIQENKCVANPMRRLFAPAHGIRVQIRKPDVPSQTEVVLEEQQESGIYEVAVRAGLNEDGEIIVEMFERRNMSDLVVSLPCDSGTKPEYGYAPIREIMEDRNERIRRFYWSIWFGKSHPILEGSLSDSFECGKEKITRQHVESFIQAINNSTRTHKNFLEPATNVSISFAIPVAWKAIVKPLFLNALNGDLLQLVHLSNEFRMTPGAEPLKIGEEVSTVARINAIMNQDSGKMVEVSAAVLRGKEIVVEIISRFLYRGAFVDFKDTFQWRDEPLMQIQLATSKHIAVLRTREWFVPTQGCNIDLVGHTLTFQMRSLYKFQSKTVFRRIETHGKVTLELAPQKIVQVATVQYEVGICHSNTVIEFLDRYGSYSQNSVDFEDPVSVPNNGESLVICAPSSNEAYARTSGDLNPIHVSRTFAEYAGLPGLITHGMYCSAAIQDLVERLVADGNAGRIRQFSMSFVGMVLPNQKLEVKLEHIGMVEGMIRLHIEARAQETGHRVIVGEAKITQKMTTYVFTGQGSQEKGMGMDLYNQCPAAREVWDRGDKYFLHKYGFAITTIVRDNPKQLTVHFGGRQGEAIRQNYINMKVETVAEDGSIQYEKLFKDVDHNTQFYTFRSPTGLLSATQFTQPALSLMARASFEHLQIQGLVDGNCYYAGHSLGEFSALAAVAGIMSVESQALIAFYRGLTMQKAVNRDESGRSNYSMCAVDPSRISATYDEEAFLTIVREIAAETGWLLEVVNFNVANKQYVCAGNLHALDTLAGVTDRLRLLQINASEMEECLHEIIRQCVQETKSKSTPLELTRGIATIPLQGIDVPFHSTFLRGGVRHFREFLHENIDKRNINPAKLIGRYIPNVTARSFQISKDYFQYVYDLTGSSQLRDALKNWDIYEKSNGEESNGVEECSECRNSL</sequence>
<organism>
    <name type="scientific">Cochliobolus carbonum</name>
    <name type="common">Maize leaf spot fungus</name>
    <name type="synonym">Bipolaris zeicola</name>
    <dbReference type="NCBI Taxonomy" id="5017"/>
    <lineage>
        <taxon>Eukaryota</taxon>
        <taxon>Fungi</taxon>
        <taxon>Dikarya</taxon>
        <taxon>Ascomycota</taxon>
        <taxon>Pezizomycotina</taxon>
        <taxon>Dothideomycetes</taxon>
        <taxon>Pleosporomycetidae</taxon>
        <taxon>Pleosporales</taxon>
        <taxon>Pleosporineae</taxon>
        <taxon>Pleosporaceae</taxon>
        <taxon>Bipolaris</taxon>
    </lineage>
</organism>
<gene>
    <name evidence="7" type="primary">TOXC</name>
</gene>
<keyword id="KW-0275">Fatty acid biosynthesis</keyword>
<keyword id="KW-0276">Fatty acid metabolism</keyword>
<keyword id="KW-0378">Hydrolase</keyword>
<keyword id="KW-0444">Lipid biosynthesis</keyword>
<keyword id="KW-0443">Lipid metabolism</keyword>
<keyword id="KW-0456">Lyase</keyword>
<keyword id="KW-0511">Multifunctional enzyme</keyword>
<keyword id="KW-0520">NAD</keyword>
<keyword id="KW-0521">NADP</keyword>
<keyword id="KW-0560">Oxidoreductase</keyword>
<keyword id="KW-0808">Transferase</keyword>
<dbReference type="EC" id="2.3.1.86" evidence="1"/>
<dbReference type="EC" id="3.1.2.14" evidence="1"/>
<dbReference type="EC" id="2.3.1.39" evidence="1"/>
<dbReference type="EC" id="4.2.1.59" evidence="1"/>
<dbReference type="EC" id="1.3.1.9" evidence="1"/>
<dbReference type="EC" id="2.3.1.38" evidence="1"/>
<dbReference type="EMBL" id="U73650">
    <property type="protein sequence ID" value="AAC62818.1"/>
    <property type="molecule type" value="Genomic_DNA"/>
</dbReference>
<dbReference type="SMR" id="Q92215"/>
<dbReference type="UniPathway" id="UPA00874"/>
<dbReference type="PHI-base" id="PHI:97"/>
<dbReference type="GO" id="GO:0005835">
    <property type="term" value="C:fatty acid synthase complex"/>
    <property type="evidence" value="ECO:0007669"/>
    <property type="project" value="InterPro"/>
</dbReference>
<dbReference type="GO" id="GO:0019171">
    <property type="term" value="F:(3R)-hydroxyacyl-[acyl-carrier-protein] dehydratase activity"/>
    <property type="evidence" value="ECO:0007669"/>
    <property type="project" value="UniProtKB-EC"/>
</dbReference>
<dbReference type="GO" id="GO:0004313">
    <property type="term" value="F:[acyl-carrier-protein] S-acetyltransferase activity"/>
    <property type="evidence" value="ECO:0007669"/>
    <property type="project" value="UniProtKB-EC"/>
</dbReference>
<dbReference type="GO" id="GO:0004314">
    <property type="term" value="F:[acyl-carrier-protein] S-malonyltransferase activity"/>
    <property type="evidence" value="ECO:0007669"/>
    <property type="project" value="UniProtKB-EC"/>
</dbReference>
<dbReference type="GO" id="GO:0004318">
    <property type="term" value="F:enoyl-[acyl-carrier-protein] reductase (NADH) activity"/>
    <property type="evidence" value="ECO:0007669"/>
    <property type="project" value="UniProtKB-EC"/>
</dbReference>
<dbReference type="GO" id="GO:0004312">
    <property type="term" value="F:fatty acid synthase activity"/>
    <property type="evidence" value="ECO:0007669"/>
    <property type="project" value="InterPro"/>
</dbReference>
<dbReference type="GO" id="GO:0016297">
    <property type="term" value="F:fatty acyl-[ACP] hydrolase activity"/>
    <property type="evidence" value="ECO:0007669"/>
    <property type="project" value="UniProtKB-EC"/>
</dbReference>
<dbReference type="GO" id="GO:0006633">
    <property type="term" value="P:fatty acid biosynthetic process"/>
    <property type="evidence" value="ECO:0007669"/>
    <property type="project" value="UniProtKB-KW"/>
</dbReference>
<dbReference type="CDD" id="cd03447">
    <property type="entry name" value="FAS_MaoC"/>
    <property type="match status" value="1"/>
</dbReference>
<dbReference type="FunFam" id="1.20.930.70:FF:000001">
    <property type="entry name" value="Fatty acid synthase beta subunit dehydratase"/>
    <property type="match status" value="1"/>
</dbReference>
<dbReference type="FunFam" id="3.20.20.70:FF:000078">
    <property type="entry name" value="Fatty acid synthase beta subunit dehydratase"/>
    <property type="match status" value="1"/>
</dbReference>
<dbReference type="FunFam" id="3.40.366.10:FF:000006">
    <property type="entry name" value="Fatty acid synthase beta subunit dehydratase"/>
    <property type="match status" value="1"/>
</dbReference>
<dbReference type="Gene3D" id="1.20.1050.120">
    <property type="match status" value="1"/>
</dbReference>
<dbReference type="Gene3D" id="1.20.930.70">
    <property type="match status" value="1"/>
</dbReference>
<dbReference type="Gene3D" id="3.30.1120.100">
    <property type="match status" value="1"/>
</dbReference>
<dbReference type="Gene3D" id="3.30.70.2430">
    <property type="match status" value="1"/>
</dbReference>
<dbReference type="Gene3D" id="6.10.140.1400">
    <property type="match status" value="1"/>
</dbReference>
<dbReference type="Gene3D" id="6.10.60.10">
    <property type="match status" value="1"/>
</dbReference>
<dbReference type="Gene3D" id="6.20.240.10">
    <property type="match status" value="1"/>
</dbReference>
<dbReference type="Gene3D" id="3.20.20.70">
    <property type="entry name" value="Aldolase class I"/>
    <property type="match status" value="1"/>
</dbReference>
<dbReference type="Gene3D" id="3.10.129.10">
    <property type="entry name" value="Hotdog Thioesterase"/>
    <property type="match status" value="2"/>
</dbReference>
<dbReference type="Gene3D" id="3.40.366.10">
    <property type="entry name" value="Malonyl-Coenzyme A Acyl Carrier Protein, domain 2"/>
    <property type="match status" value="3"/>
</dbReference>
<dbReference type="InterPro" id="IPR001227">
    <property type="entry name" value="Ac_transferase_dom_sf"/>
</dbReference>
<dbReference type="InterPro" id="IPR014043">
    <property type="entry name" value="Acyl_transferase_dom"/>
</dbReference>
<dbReference type="InterPro" id="IPR016035">
    <property type="entry name" value="Acyl_Trfase/lysoPLipase"/>
</dbReference>
<dbReference type="InterPro" id="IPR013785">
    <property type="entry name" value="Aldolase_TIM"/>
</dbReference>
<dbReference type="InterPro" id="IPR039569">
    <property type="entry name" value="FAS1-like_DH_region"/>
</dbReference>
<dbReference type="InterPro" id="IPR016452">
    <property type="entry name" value="Fas1/AflB-like"/>
</dbReference>
<dbReference type="InterPro" id="IPR013565">
    <property type="entry name" value="Fas1/AflB-like_central"/>
</dbReference>
<dbReference type="InterPro" id="IPR041099">
    <property type="entry name" value="FAS1_N"/>
</dbReference>
<dbReference type="InterPro" id="IPR040883">
    <property type="entry name" value="FAS_meander"/>
</dbReference>
<dbReference type="InterPro" id="IPR003965">
    <property type="entry name" value="Fatty_acid_synthase"/>
</dbReference>
<dbReference type="InterPro" id="IPR050830">
    <property type="entry name" value="Fungal_FAS"/>
</dbReference>
<dbReference type="InterPro" id="IPR029069">
    <property type="entry name" value="HotDog_dom_sf"/>
</dbReference>
<dbReference type="InterPro" id="IPR002539">
    <property type="entry name" value="MaoC-like_dom"/>
</dbReference>
<dbReference type="InterPro" id="IPR032088">
    <property type="entry name" value="SAT"/>
</dbReference>
<dbReference type="PANTHER" id="PTHR10982:SF21">
    <property type="entry name" value="FATTY ACID SYNTHASE SUBUNIT BETA"/>
    <property type="match status" value="1"/>
</dbReference>
<dbReference type="PANTHER" id="PTHR10982">
    <property type="entry name" value="MALONYL COA-ACYL CARRIER PROTEIN TRANSACYLASE"/>
    <property type="match status" value="1"/>
</dbReference>
<dbReference type="Pfam" id="PF00698">
    <property type="entry name" value="Acyl_transf_1"/>
    <property type="match status" value="1"/>
</dbReference>
<dbReference type="Pfam" id="PF08354">
    <property type="entry name" value="Fas1-AflB-like_hel"/>
    <property type="match status" value="1"/>
</dbReference>
<dbReference type="Pfam" id="PF13452">
    <property type="entry name" value="FAS1_DH_region"/>
    <property type="match status" value="1"/>
</dbReference>
<dbReference type="Pfam" id="PF22235">
    <property type="entry name" value="FAS1_thioest_ins"/>
    <property type="match status" value="1"/>
</dbReference>
<dbReference type="Pfam" id="PF17951">
    <property type="entry name" value="FAS_meander"/>
    <property type="match status" value="1"/>
</dbReference>
<dbReference type="Pfam" id="PF17828">
    <property type="entry name" value="FAS_N"/>
    <property type="match status" value="1"/>
</dbReference>
<dbReference type="Pfam" id="PF01575">
    <property type="entry name" value="MaoC_dehydratas"/>
    <property type="match status" value="1"/>
</dbReference>
<dbReference type="Pfam" id="PF16073">
    <property type="entry name" value="SAT"/>
    <property type="match status" value="1"/>
</dbReference>
<dbReference type="PIRSF" id="PIRSF005562">
    <property type="entry name" value="FAS_yeast_beta"/>
    <property type="match status" value="1"/>
</dbReference>
<dbReference type="PRINTS" id="PR01483">
    <property type="entry name" value="FASYNTHASE"/>
</dbReference>
<dbReference type="SMART" id="SM00827">
    <property type="entry name" value="PKS_AT"/>
    <property type="match status" value="1"/>
</dbReference>
<dbReference type="SUPFAM" id="SSF52151">
    <property type="entry name" value="FabD/lysophospholipase-like"/>
    <property type="match status" value="2"/>
</dbReference>
<dbReference type="SUPFAM" id="SSF54637">
    <property type="entry name" value="Thioesterase/thiol ester dehydrase-isomerase"/>
    <property type="match status" value="2"/>
</dbReference>
<proteinExistence type="inferred from homology"/>
<protein>
    <recommendedName>
        <fullName evidence="7">Fatty acid synthase beta subunit TOXC</fullName>
        <ecNumber evidence="1">2.3.1.86</ecNumber>
    </recommendedName>
    <alternativeName>
        <fullName evidence="1">S-acyl fatty acid synthase thioesterase</fullName>
        <ecNumber evidence="1">3.1.2.14</ecNumber>
    </alternativeName>
    <alternativeName>
        <fullName evidence="1">[Acyl-carrier-protein] malonyltransferase</fullName>
        <ecNumber evidence="1">2.3.1.39</ecNumber>
    </alternativeName>
    <domain>
        <recommendedName>
            <fullName evidence="1">3-hydroxyacyl-[acyl-carrier-protein] dehydratase</fullName>
            <ecNumber evidence="1">4.2.1.59</ecNumber>
        </recommendedName>
    </domain>
    <domain>
        <recommendedName>
            <fullName evidence="1">Enoyl-[acyl-carrier-protein] reductase [NADH]</fullName>
            <ecNumber evidence="1">1.3.1.9</ecNumber>
        </recommendedName>
    </domain>
    <domain>
        <recommendedName>
            <fullName evidence="1">[Acyl-carrier-protein] acetyltransferase</fullName>
            <ecNumber evidence="1">2.3.1.38</ecNumber>
        </recommendedName>
        <alternativeName>
            <fullName evidence="7">TOX2 HC-toxin biosynthesis cluster protein TOXC</fullName>
        </alternativeName>
    </domain>
</protein>
<comment type="function">
    <text evidence="5 6">Fatty acid synthase beta subunit, part of the diffuse TOX2 gene cluster that mediates the biosynthesis of the HC-toxin, cyclic tetrapeptide of structure cyclo(D-Pro-L-Ala-D-Ala-L-Aeo), where Aeo stands for 2-amino-9,10-epoxi-8-oxodecanoic acid (PubMed:8672886, PubMed:9057326). HC-toxin is a determinant of specificity and virulence in the interaction between the producing fungus and its host, maize (PubMed:9057326). TOXC contribute to the synthesis of the decanoic backbone of 2-amino-9,10-epoxi-8-oxodecanoic acid, an essential precursor for the production of the major forms of HC-toxin by the non-ribosomal peptide synthetase HTS1 (PubMed:9057326).</text>
</comment>
<comment type="catalytic activity">
    <reaction evidence="1">
        <text>acetyl-CoA + n malonyl-CoA + 2n NADPH + 4n H(+) = a long-chain-acyl-CoA + n CoA + n CO2 + 2n NADP(+).</text>
        <dbReference type="EC" id="2.3.1.86"/>
    </reaction>
</comment>
<comment type="catalytic activity">
    <reaction evidence="1">
        <text>holo-[ACP] + acetyl-CoA = acetyl-[ACP] + CoA</text>
        <dbReference type="Rhea" id="RHEA:41788"/>
        <dbReference type="Rhea" id="RHEA-COMP:9621"/>
        <dbReference type="Rhea" id="RHEA-COMP:9685"/>
        <dbReference type="ChEBI" id="CHEBI:57287"/>
        <dbReference type="ChEBI" id="CHEBI:57288"/>
        <dbReference type="ChEBI" id="CHEBI:64479"/>
        <dbReference type="ChEBI" id="CHEBI:78446"/>
        <dbReference type="EC" id="2.3.1.38"/>
    </reaction>
</comment>
<comment type="catalytic activity">
    <reaction evidence="1">
        <text>holo-[ACP] + malonyl-CoA = malonyl-[ACP] + CoA</text>
        <dbReference type="Rhea" id="RHEA:41792"/>
        <dbReference type="Rhea" id="RHEA-COMP:9623"/>
        <dbReference type="Rhea" id="RHEA-COMP:9685"/>
        <dbReference type="ChEBI" id="CHEBI:57287"/>
        <dbReference type="ChEBI" id="CHEBI:57384"/>
        <dbReference type="ChEBI" id="CHEBI:64479"/>
        <dbReference type="ChEBI" id="CHEBI:78449"/>
        <dbReference type="EC" id="2.3.1.39"/>
    </reaction>
</comment>
<comment type="catalytic activity">
    <reaction evidence="1">
        <text>a (3R)-hydroxyacyl-[ACP] = a (2E)-enoyl-[ACP] + H2O</text>
        <dbReference type="Rhea" id="RHEA:13097"/>
        <dbReference type="Rhea" id="RHEA-COMP:9925"/>
        <dbReference type="Rhea" id="RHEA-COMP:9945"/>
        <dbReference type="ChEBI" id="CHEBI:15377"/>
        <dbReference type="ChEBI" id="CHEBI:78784"/>
        <dbReference type="ChEBI" id="CHEBI:78827"/>
        <dbReference type="EC" id="4.2.1.59"/>
    </reaction>
</comment>
<comment type="catalytic activity">
    <reaction evidence="1">
        <text>a 2,3-saturated acyl-[ACP] + NAD(+) = a (2E)-enoyl-[ACP] + NADH + H(+)</text>
        <dbReference type="Rhea" id="RHEA:10240"/>
        <dbReference type="Rhea" id="RHEA-COMP:9925"/>
        <dbReference type="Rhea" id="RHEA-COMP:9926"/>
        <dbReference type="ChEBI" id="CHEBI:15378"/>
        <dbReference type="ChEBI" id="CHEBI:57540"/>
        <dbReference type="ChEBI" id="CHEBI:57945"/>
        <dbReference type="ChEBI" id="CHEBI:78784"/>
        <dbReference type="ChEBI" id="CHEBI:78785"/>
        <dbReference type="EC" id="1.3.1.9"/>
    </reaction>
</comment>
<comment type="catalytic activity">
    <reaction evidence="1">
        <text>(9Z)-octadecenoyl-[ACP] + H2O = (9Z)-octadecenoate + holo-[ACP] + H(+)</text>
        <dbReference type="Rhea" id="RHEA:15057"/>
        <dbReference type="Rhea" id="RHEA-COMP:9685"/>
        <dbReference type="Rhea" id="RHEA-COMP:9924"/>
        <dbReference type="ChEBI" id="CHEBI:15377"/>
        <dbReference type="ChEBI" id="CHEBI:15378"/>
        <dbReference type="ChEBI" id="CHEBI:30823"/>
        <dbReference type="ChEBI" id="CHEBI:64479"/>
        <dbReference type="ChEBI" id="CHEBI:78783"/>
        <dbReference type="EC" id="3.1.2.14"/>
    </reaction>
</comment>
<comment type="pathway">
    <text evidence="6">Mycotoxin biosynthesis; HC-toxin biosynthesis.</text>
</comment>
<comment type="disruption phenotype">
    <text evidence="6">Does not affect growth and sporulation, but impairs the production of HC-toxin and related pathogenicity.</text>
</comment>
<comment type="miscellaneous">
    <text evidence="4 5">The genes involved in HC-toxin biosynthesis, called collectively TOX2, are organized into a diffuse cluster that spans &gt;500 kb. All of the known genes are duplicated or triplicated within this region, with some variation in copy number and chromosomal location among different race 1 strains.</text>
</comment>
<comment type="similarity">
    <text evidence="8">Belongs to the fungal fatty acid synthetase subunit beta family.</text>
</comment>
<evidence type="ECO:0000250" key="1">
    <source>
        <dbReference type="UniProtKB" id="Q8TGA1"/>
    </source>
</evidence>
<evidence type="ECO:0000255" key="2"/>
<evidence type="ECO:0000255" key="3">
    <source>
        <dbReference type="PIRSR" id="PIRSR005562-1"/>
    </source>
</evidence>
<evidence type="ECO:0000269" key="4">
    <source>
    </source>
</evidence>
<evidence type="ECO:0000269" key="5">
    <source>
    </source>
</evidence>
<evidence type="ECO:0000269" key="6">
    <source>
    </source>
</evidence>
<evidence type="ECO:0000303" key="7">
    <source>
    </source>
</evidence>
<evidence type="ECO:0000305" key="8"/>